<evidence type="ECO:0000305" key="1"/>
<reference key="1">
    <citation type="journal article" date="2002" name="Proc. Natl. Acad. Sci. U.S.A.">
        <title>The genome sequence of Bifidobacterium longum reflects its adaptation to the human gastrointestinal tract.</title>
        <authorList>
            <person name="Schell M.A."/>
            <person name="Karmirantzou M."/>
            <person name="Snel B."/>
            <person name="Vilanova D."/>
            <person name="Berger B."/>
            <person name="Pessi G."/>
            <person name="Zwahlen M.-C."/>
            <person name="Desiere F."/>
            <person name="Bork P."/>
            <person name="Delley M."/>
            <person name="Pridmore R.D."/>
            <person name="Arigoni F."/>
        </authorList>
    </citation>
    <scope>NUCLEOTIDE SEQUENCE [LARGE SCALE GENOMIC DNA]</scope>
    <source>
        <strain>NCC 2705</strain>
    </source>
</reference>
<proteinExistence type="inferred from homology"/>
<dbReference type="EMBL" id="AE014295">
    <property type="protein sequence ID" value="AAN24458.1"/>
    <property type="molecule type" value="Genomic_DNA"/>
</dbReference>
<dbReference type="RefSeq" id="NP_695822.1">
    <property type="nucleotide sequence ID" value="NC_004307.2"/>
</dbReference>
<dbReference type="RefSeq" id="WP_008783054.1">
    <property type="nucleotide sequence ID" value="NC_004307.2"/>
</dbReference>
<dbReference type="SMR" id="Q8G6K4"/>
<dbReference type="STRING" id="206672.BL0636"/>
<dbReference type="EnsemblBacteria" id="AAN24458">
    <property type="protein sequence ID" value="AAN24458"/>
    <property type="gene ID" value="BL0636"/>
</dbReference>
<dbReference type="KEGG" id="blo:BL0636"/>
<dbReference type="PATRIC" id="fig|206672.9.peg.1368"/>
<dbReference type="HOGENOM" id="CLU_087206_2_1_11"/>
<dbReference type="OrthoDB" id="5516926at2"/>
<dbReference type="PhylomeDB" id="Q8G6K4"/>
<dbReference type="Proteomes" id="UP000000439">
    <property type="component" value="Chromosome"/>
</dbReference>
<dbReference type="HAMAP" id="MF_00630">
    <property type="entry name" value="UPF0232"/>
    <property type="match status" value="1"/>
</dbReference>
<dbReference type="InterPro" id="IPR007922">
    <property type="entry name" value="DciA-like"/>
</dbReference>
<dbReference type="InterPro" id="IPR023007">
    <property type="entry name" value="UPF0232_actinobac"/>
</dbReference>
<dbReference type="PANTHER" id="PTHR36456">
    <property type="entry name" value="UPF0232 PROTEIN SCO3875"/>
    <property type="match status" value="1"/>
</dbReference>
<dbReference type="PANTHER" id="PTHR36456:SF1">
    <property type="entry name" value="UPF0232 PROTEIN SCO3875"/>
    <property type="match status" value="1"/>
</dbReference>
<dbReference type="Pfam" id="PF05258">
    <property type="entry name" value="DciA"/>
    <property type="match status" value="1"/>
</dbReference>
<sequence>MNPPIARQLNLDETKLPAEIFERLSRRGATLKDYRRRREEAIENFGKPGRDPAELGSVMTTIAGNGVWAANMKLAQLRNHWDQVVGQAIASHSAVADFTDGVLTIRAESTVWATQLTYLIPQLTDTIRRNLKGLTITEIRVTGPAAGYTRKWARRR</sequence>
<feature type="chain" id="PRO_0000211358" description="UPF0232 protein BL0636">
    <location>
        <begin position="1"/>
        <end position="156"/>
    </location>
</feature>
<protein>
    <recommendedName>
        <fullName>UPF0232 protein BL0636</fullName>
    </recommendedName>
</protein>
<name>Y636_BIFLO</name>
<organism>
    <name type="scientific">Bifidobacterium longum (strain NCC 2705)</name>
    <dbReference type="NCBI Taxonomy" id="206672"/>
    <lineage>
        <taxon>Bacteria</taxon>
        <taxon>Bacillati</taxon>
        <taxon>Actinomycetota</taxon>
        <taxon>Actinomycetes</taxon>
        <taxon>Bifidobacteriales</taxon>
        <taxon>Bifidobacteriaceae</taxon>
        <taxon>Bifidobacterium</taxon>
    </lineage>
</organism>
<accession>Q8G6K4</accession>
<gene>
    <name type="ordered locus">BL0636</name>
</gene>
<comment type="similarity">
    <text evidence="1">Belongs to the UPF0232 family.</text>
</comment>
<keyword id="KW-1185">Reference proteome</keyword>